<keyword id="KW-0067">ATP-binding</keyword>
<keyword id="KW-0131">Cell cycle</keyword>
<keyword id="KW-0132">Cell division</keyword>
<keyword id="KW-0133">Cell shape</keyword>
<keyword id="KW-0961">Cell wall biogenesis/degradation</keyword>
<keyword id="KW-0963">Cytoplasm</keyword>
<keyword id="KW-0436">Ligase</keyword>
<keyword id="KW-0460">Magnesium</keyword>
<keyword id="KW-0547">Nucleotide-binding</keyword>
<keyword id="KW-0573">Peptidoglycan synthesis</keyword>
<comment type="function">
    <text evidence="1">Catalyzes the addition of meso-diaminopimelic acid to the nucleotide precursor UDP-N-acetylmuramoyl-L-alanyl-D-glutamate (UMAG) in the biosynthesis of bacterial cell-wall peptidoglycan.</text>
</comment>
<comment type="catalytic activity">
    <reaction evidence="1">
        <text>UDP-N-acetyl-alpha-D-muramoyl-L-alanyl-D-glutamate + meso-2,6-diaminopimelate + ATP = UDP-N-acetyl-alpha-D-muramoyl-L-alanyl-gamma-D-glutamyl-meso-2,6-diaminopimelate + ADP + phosphate + H(+)</text>
        <dbReference type="Rhea" id="RHEA:23676"/>
        <dbReference type="ChEBI" id="CHEBI:15378"/>
        <dbReference type="ChEBI" id="CHEBI:30616"/>
        <dbReference type="ChEBI" id="CHEBI:43474"/>
        <dbReference type="ChEBI" id="CHEBI:57791"/>
        <dbReference type="ChEBI" id="CHEBI:83900"/>
        <dbReference type="ChEBI" id="CHEBI:83905"/>
        <dbReference type="ChEBI" id="CHEBI:456216"/>
        <dbReference type="EC" id="6.3.2.13"/>
    </reaction>
</comment>
<comment type="cofactor">
    <cofactor evidence="1">
        <name>Mg(2+)</name>
        <dbReference type="ChEBI" id="CHEBI:18420"/>
    </cofactor>
</comment>
<comment type="pathway">
    <text evidence="1">Cell wall biogenesis; peptidoglycan biosynthesis.</text>
</comment>
<comment type="subcellular location">
    <subcellularLocation>
        <location evidence="1">Cytoplasm</location>
    </subcellularLocation>
</comment>
<comment type="PTM">
    <text evidence="1">Carboxylation is probably crucial for Mg(2+) binding and, consequently, for the gamma-phosphate positioning of ATP.</text>
</comment>
<comment type="similarity">
    <text evidence="1">Belongs to the MurCDEF family. MurE subfamily.</text>
</comment>
<proteinExistence type="inferred from homology"/>
<reference key="1">
    <citation type="journal article" date="2009" name="Appl. Environ. Microbiol.">
        <title>Three genomes from the phylum Acidobacteria provide insight into the lifestyles of these microorganisms in soils.</title>
        <authorList>
            <person name="Ward N.L."/>
            <person name="Challacombe J.F."/>
            <person name="Janssen P.H."/>
            <person name="Henrissat B."/>
            <person name="Coutinho P.M."/>
            <person name="Wu M."/>
            <person name="Xie G."/>
            <person name="Haft D.H."/>
            <person name="Sait M."/>
            <person name="Badger J."/>
            <person name="Barabote R.D."/>
            <person name="Bradley B."/>
            <person name="Brettin T.S."/>
            <person name="Brinkac L.M."/>
            <person name="Bruce D."/>
            <person name="Creasy T."/>
            <person name="Daugherty S.C."/>
            <person name="Davidsen T.M."/>
            <person name="DeBoy R.T."/>
            <person name="Detter J.C."/>
            <person name="Dodson R.J."/>
            <person name="Durkin A.S."/>
            <person name="Ganapathy A."/>
            <person name="Gwinn-Giglio M."/>
            <person name="Han C.S."/>
            <person name="Khouri H."/>
            <person name="Kiss H."/>
            <person name="Kothari S.P."/>
            <person name="Madupu R."/>
            <person name="Nelson K.E."/>
            <person name="Nelson W.C."/>
            <person name="Paulsen I."/>
            <person name="Penn K."/>
            <person name="Ren Q."/>
            <person name="Rosovitz M.J."/>
            <person name="Selengut J.D."/>
            <person name="Shrivastava S."/>
            <person name="Sullivan S.A."/>
            <person name="Tapia R."/>
            <person name="Thompson L.S."/>
            <person name="Watkins K.L."/>
            <person name="Yang Q."/>
            <person name="Yu C."/>
            <person name="Zafar N."/>
            <person name="Zhou L."/>
            <person name="Kuske C.R."/>
        </authorList>
    </citation>
    <scope>NUCLEOTIDE SEQUENCE [LARGE SCALE GENOMIC DNA]</scope>
    <source>
        <strain>Ellin6076</strain>
    </source>
</reference>
<evidence type="ECO:0000255" key="1">
    <source>
        <dbReference type="HAMAP-Rule" id="MF_00208"/>
    </source>
</evidence>
<protein>
    <recommendedName>
        <fullName evidence="1">UDP-N-acetylmuramoyl-L-alanyl-D-glutamate--2,6-diaminopimelate ligase</fullName>
        <ecNumber evidence="1">6.3.2.13</ecNumber>
    </recommendedName>
    <alternativeName>
        <fullName evidence="1">Meso-A2pm-adding enzyme</fullName>
    </alternativeName>
    <alternativeName>
        <fullName evidence="1">Meso-diaminopimelate-adding enzyme</fullName>
    </alternativeName>
    <alternativeName>
        <fullName evidence="1">UDP-MurNAc-L-Ala-D-Glu:meso-diaminopimelate ligase</fullName>
    </alternativeName>
    <alternativeName>
        <fullName evidence="1">UDP-MurNAc-tripeptide synthetase</fullName>
    </alternativeName>
    <alternativeName>
        <fullName evidence="1">UDP-N-acetylmuramyl-tripeptide synthetase</fullName>
    </alternativeName>
</protein>
<gene>
    <name evidence="1" type="primary">murE</name>
    <name type="ordered locus">Acid_7316</name>
</gene>
<name>MURE_SOLUE</name>
<sequence>MNLGEILSSVKLPRPLAPELAQTEVTGLAYDSRRVTPGVLFFAFPGSKADGREFAADALARGAVAVISESLAPPDLAARWIQVEHGRHALALAARTFFGRPDERLGLTGITGTNGKTTTAYLTDSVLRAAGGVTAMIGTIEYHLAGRVLKAVNTTPESLDLLQIFSDLLRAGGTHVTMEVSSHALALGRVHGLNFHTAVFTNLTRDHLDFHGDMERYFAAKQMLFEGAGGNPPRFAVLNTDDEYSRRLRLHARTERLWYGMTPEADLRPRHIVSSFKGLRFDLQFRKQRFTIESPLIGKINVYNILAACATGFSYGLAPEVVARGIASLKAVPGRFERVDEGQPFVVVVDYAHTDDALRNVIAVARGLNPRRVITLFGCGGDRDRAKRPLMGKAAAEASDFVVLTSDNPRSEDPLTIMNDALVGIRRTDVAHVVEPDREAAIRRAIKEAREGDIVILAGKGHETYQVLKDKTIDFDDRAVAREVLKGYGYHQTQ</sequence>
<feature type="chain" id="PRO_1000012379" description="UDP-N-acetylmuramoyl-L-alanyl-D-glutamate--2,6-diaminopimelate ligase">
    <location>
        <begin position="1"/>
        <end position="494"/>
    </location>
</feature>
<feature type="short sequence motif" description="Meso-diaminopimelate recognition motif">
    <location>
        <begin position="407"/>
        <end position="410"/>
    </location>
</feature>
<feature type="binding site" evidence="1">
    <location>
        <position position="32"/>
    </location>
    <ligand>
        <name>UDP-N-acetyl-alpha-D-muramoyl-L-alanyl-D-glutamate</name>
        <dbReference type="ChEBI" id="CHEBI:83900"/>
    </ligand>
</feature>
<feature type="binding site" evidence="1">
    <location>
        <begin position="112"/>
        <end position="118"/>
    </location>
    <ligand>
        <name>ATP</name>
        <dbReference type="ChEBI" id="CHEBI:30616"/>
    </ligand>
</feature>
<feature type="binding site" evidence="1">
    <location>
        <position position="153"/>
    </location>
    <ligand>
        <name>UDP-N-acetyl-alpha-D-muramoyl-L-alanyl-D-glutamate</name>
        <dbReference type="ChEBI" id="CHEBI:83900"/>
    </ligand>
</feature>
<feature type="binding site" evidence="1">
    <location>
        <begin position="154"/>
        <end position="155"/>
    </location>
    <ligand>
        <name>UDP-N-acetyl-alpha-D-muramoyl-L-alanyl-D-glutamate</name>
        <dbReference type="ChEBI" id="CHEBI:83900"/>
    </ligand>
</feature>
<feature type="binding site" evidence="1">
    <location>
        <position position="181"/>
    </location>
    <ligand>
        <name>UDP-N-acetyl-alpha-D-muramoyl-L-alanyl-D-glutamate</name>
        <dbReference type="ChEBI" id="CHEBI:83900"/>
    </ligand>
</feature>
<feature type="binding site" evidence="1">
    <location>
        <position position="189"/>
    </location>
    <ligand>
        <name>UDP-N-acetyl-alpha-D-muramoyl-L-alanyl-D-glutamate</name>
        <dbReference type="ChEBI" id="CHEBI:83900"/>
    </ligand>
</feature>
<feature type="binding site" evidence="1">
    <location>
        <position position="383"/>
    </location>
    <ligand>
        <name>meso-2,6-diaminopimelate</name>
        <dbReference type="ChEBI" id="CHEBI:57791"/>
    </ligand>
</feature>
<feature type="binding site" evidence="1">
    <location>
        <begin position="407"/>
        <end position="410"/>
    </location>
    <ligand>
        <name>meso-2,6-diaminopimelate</name>
        <dbReference type="ChEBI" id="CHEBI:57791"/>
    </ligand>
</feature>
<feature type="binding site" evidence="1">
    <location>
        <position position="459"/>
    </location>
    <ligand>
        <name>meso-2,6-diaminopimelate</name>
        <dbReference type="ChEBI" id="CHEBI:57791"/>
    </ligand>
</feature>
<feature type="binding site" evidence="1">
    <location>
        <position position="463"/>
    </location>
    <ligand>
        <name>meso-2,6-diaminopimelate</name>
        <dbReference type="ChEBI" id="CHEBI:57791"/>
    </ligand>
</feature>
<feature type="modified residue" description="N6-carboxylysine" evidence="1">
    <location>
        <position position="221"/>
    </location>
</feature>
<dbReference type="EC" id="6.3.2.13" evidence="1"/>
<dbReference type="EMBL" id="CP000473">
    <property type="protein sequence ID" value="ABJ88227.1"/>
    <property type="molecule type" value="Genomic_DNA"/>
</dbReference>
<dbReference type="SMR" id="Q01Q43"/>
<dbReference type="FunCoup" id="Q01Q43">
    <property type="interactions" value="628"/>
</dbReference>
<dbReference type="STRING" id="234267.Acid_7316"/>
<dbReference type="KEGG" id="sus:Acid_7316"/>
<dbReference type="eggNOG" id="COG0769">
    <property type="taxonomic scope" value="Bacteria"/>
</dbReference>
<dbReference type="HOGENOM" id="CLU_022291_4_1_0"/>
<dbReference type="InParanoid" id="Q01Q43"/>
<dbReference type="OrthoDB" id="9800958at2"/>
<dbReference type="UniPathway" id="UPA00219"/>
<dbReference type="GO" id="GO:0005737">
    <property type="term" value="C:cytoplasm"/>
    <property type="evidence" value="ECO:0007669"/>
    <property type="project" value="UniProtKB-SubCell"/>
</dbReference>
<dbReference type="GO" id="GO:0005524">
    <property type="term" value="F:ATP binding"/>
    <property type="evidence" value="ECO:0007669"/>
    <property type="project" value="UniProtKB-UniRule"/>
</dbReference>
<dbReference type="GO" id="GO:0000287">
    <property type="term" value="F:magnesium ion binding"/>
    <property type="evidence" value="ECO:0007669"/>
    <property type="project" value="UniProtKB-UniRule"/>
</dbReference>
<dbReference type="GO" id="GO:0008765">
    <property type="term" value="F:UDP-N-acetylmuramoylalanyl-D-glutamate-2,6-diaminopimelate ligase activity"/>
    <property type="evidence" value="ECO:0007669"/>
    <property type="project" value="UniProtKB-UniRule"/>
</dbReference>
<dbReference type="GO" id="GO:0051301">
    <property type="term" value="P:cell division"/>
    <property type="evidence" value="ECO:0007669"/>
    <property type="project" value="UniProtKB-KW"/>
</dbReference>
<dbReference type="GO" id="GO:0071555">
    <property type="term" value="P:cell wall organization"/>
    <property type="evidence" value="ECO:0007669"/>
    <property type="project" value="UniProtKB-KW"/>
</dbReference>
<dbReference type="GO" id="GO:0009252">
    <property type="term" value="P:peptidoglycan biosynthetic process"/>
    <property type="evidence" value="ECO:0007669"/>
    <property type="project" value="UniProtKB-UniRule"/>
</dbReference>
<dbReference type="GO" id="GO:0008360">
    <property type="term" value="P:regulation of cell shape"/>
    <property type="evidence" value="ECO:0007669"/>
    <property type="project" value="UniProtKB-KW"/>
</dbReference>
<dbReference type="Gene3D" id="3.90.190.20">
    <property type="entry name" value="Mur ligase, C-terminal domain"/>
    <property type="match status" value="1"/>
</dbReference>
<dbReference type="Gene3D" id="3.40.1190.10">
    <property type="entry name" value="Mur-like, catalytic domain"/>
    <property type="match status" value="1"/>
</dbReference>
<dbReference type="Gene3D" id="3.40.1390.10">
    <property type="entry name" value="MurE/MurF, N-terminal domain"/>
    <property type="match status" value="1"/>
</dbReference>
<dbReference type="HAMAP" id="MF_00208">
    <property type="entry name" value="MurE"/>
    <property type="match status" value="1"/>
</dbReference>
<dbReference type="InterPro" id="IPR036565">
    <property type="entry name" value="Mur-like_cat_sf"/>
</dbReference>
<dbReference type="InterPro" id="IPR004101">
    <property type="entry name" value="Mur_ligase_C"/>
</dbReference>
<dbReference type="InterPro" id="IPR036615">
    <property type="entry name" value="Mur_ligase_C_dom_sf"/>
</dbReference>
<dbReference type="InterPro" id="IPR013221">
    <property type="entry name" value="Mur_ligase_cen"/>
</dbReference>
<dbReference type="InterPro" id="IPR000713">
    <property type="entry name" value="Mur_ligase_N"/>
</dbReference>
<dbReference type="InterPro" id="IPR035911">
    <property type="entry name" value="MurE/MurF_N"/>
</dbReference>
<dbReference type="InterPro" id="IPR005761">
    <property type="entry name" value="UDP-N-AcMur-Glu-dNH2Pim_ligase"/>
</dbReference>
<dbReference type="NCBIfam" id="TIGR01085">
    <property type="entry name" value="murE"/>
    <property type="match status" value="1"/>
</dbReference>
<dbReference type="NCBIfam" id="NF001124">
    <property type="entry name" value="PRK00139.1-2"/>
    <property type="match status" value="1"/>
</dbReference>
<dbReference type="NCBIfam" id="NF001126">
    <property type="entry name" value="PRK00139.1-4"/>
    <property type="match status" value="1"/>
</dbReference>
<dbReference type="PANTHER" id="PTHR23135">
    <property type="entry name" value="MUR LIGASE FAMILY MEMBER"/>
    <property type="match status" value="1"/>
</dbReference>
<dbReference type="PANTHER" id="PTHR23135:SF4">
    <property type="entry name" value="UDP-N-ACETYLMURAMOYL-L-ALANYL-D-GLUTAMATE--2,6-DIAMINOPIMELATE LIGASE MURE HOMOLOG, CHLOROPLASTIC"/>
    <property type="match status" value="1"/>
</dbReference>
<dbReference type="Pfam" id="PF01225">
    <property type="entry name" value="Mur_ligase"/>
    <property type="match status" value="1"/>
</dbReference>
<dbReference type="Pfam" id="PF02875">
    <property type="entry name" value="Mur_ligase_C"/>
    <property type="match status" value="1"/>
</dbReference>
<dbReference type="Pfam" id="PF08245">
    <property type="entry name" value="Mur_ligase_M"/>
    <property type="match status" value="1"/>
</dbReference>
<dbReference type="SUPFAM" id="SSF53623">
    <property type="entry name" value="MurD-like peptide ligases, catalytic domain"/>
    <property type="match status" value="1"/>
</dbReference>
<dbReference type="SUPFAM" id="SSF53244">
    <property type="entry name" value="MurD-like peptide ligases, peptide-binding domain"/>
    <property type="match status" value="1"/>
</dbReference>
<dbReference type="SUPFAM" id="SSF63418">
    <property type="entry name" value="MurE/MurF N-terminal domain"/>
    <property type="match status" value="1"/>
</dbReference>
<accession>Q01Q43</accession>
<organism>
    <name type="scientific">Solibacter usitatus (strain Ellin6076)</name>
    <dbReference type="NCBI Taxonomy" id="234267"/>
    <lineage>
        <taxon>Bacteria</taxon>
        <taxon>Pseudomonadati</taxon>
        <taxon>Acidobacteriota</taxon>
        <taxon>Terriglobia</taxon>
        <taxon>Bryobacterales</taxon>
        <taxon>Solibacteraceae</taxon>
        <taxon>Candidatus Solibacter</taxon>
    </lineage>
</organism>